<keyword id="KW-0297">G-protein coupled receptor</keyword>
<keyword id="KW-0325">Glycoprotein</keyword>
<keyword id="KW-0472">Membrane</keyword>
<keyword id="KW-0675">Receptor</keyword>
<keyword id="KW-1185">Reference proteome</keyword>
<keyword id="KW-0716">Sensory transduction</keyword>
<keyword id="KW-0919">Taste</keyword>
<keyword id="KW-0807">Transducer</keyword>
<keyword id="KW-0812">Transmembrane</keyword>
<keyword id="KW-1133">Transmembrane helix</keyword>
<evidence type="ECO:0000250" key="1"/>
<evidence type="ECO:0000255" key="2"/>
<evidence type="ECO:0000305" key="3"/>
<gene>
    <name type="primary">TAS2R31</name>
    <name type="synonym">TAS2R44</name>
</gene>
<protein>
    <recommendedName>
        <fullName>Taste receptor type 2 member 31</fullName>
        <shortName>T2R31</shortName>
    </recommendedName>
    <alternativeName>
        <fullName>Taste receptor type 2 member 44</fullName>
        <shortName>T2R44</shortName>
    </alternativeName>
</protein>
<feature type="chain" id="PRO_0000082311" description="Taste receptor type 2 member 31">
    <location>
        <begin position="1"/>
        <end position="309"/>
    </location>
</feature>
<feature type="topological domain" description="Extracellular" evidence="2">
    <location>
        <begin position="1"/>
        <end position="2"/>
    </location>
</feature>
<feature type="transmembrane region" description="Helical; Name=1" evidence="2">
    <location>
        <begin position="3"/>
        <end position="23"/>
    </location>
</feature>
<feature type="topological domain" description="Cytoplasmic" evidence="2">
    <location>
        <begin position="24"/>
        <end position="55"/>
    </location>
</feature>
<feature type="transmembrane region" description="Helical; Name=2" evidence="2">
    <location>
        <begin position="56"/>
        <end position="76"/>
    </location>
</feature>
<feature type="topological domain" description="Extracellular" evidence="2">
    <location>
        <begin position="77"/>
        <end position="100"/>
    </location>
</feature>
<feature type="transmembrane region" description="Helical; Name=3" evidence="2">
    <location>
        <begin position="101"/>
        <end position="121"/>
    </location>
</feature>
<feature type="topological domain" description="Cytoplasmic" evidence="2">
    <location>
        <begin position="122"/>
        <end position="126"/>
    </location>
</feature>
<feature type="transmembrane region" description="Helical; Name=4" evidence="2">
    <location>
        <begin position="127"/>
        <end position="147"/>
    </location>
</feature>
<feature type="topological domain" description="Extracellular" evidence="2">
    <location>
        <begin position="148"/>
        <end position="181"/>
    </location>
</feature>
<feature type="transmembrane region" description="Helical; Name=5" evidence="2">
    <location>
        <begin position="182"/>
        <end position="202"/>
    </location>
</feature>
<feature type="topological domain" description="Cytoplasmic" evidence="2">
    <location>
        <begin position="203"/>
        <end position="229"/>
    </location>
</feature>
<feature type="transmembrane region" description="Helical; Name=6" evidence="2">
    <location>
        <begin position="230"/>
        <end position="250"/>
    </location>
</feature>
<feature type="topological domain" description="Extracellular" evidence="2">
    <location>
        <begin position="251"/>
        <end position="259"/>
    </location>
</feature>
<feature type="transmembrane region" description="Helical; Name=7" evidence="2">
    <location>
        <begin position="260"/>
        <end position="280"/>
    </location>
</feature>
<feature type="topological domain" description="Cytoplasmic" evidence="2">
    <location>
        <begin position="281"/>
        <end position="309"/>
    </location>
</feature>
<feature type="glycosylation site" description="N-linked (GlcNAc...) asparagine" evidence="2">
    <location>
        <position position="161"/>
    </location>
</feature>
<accession>Q646B9</accession>
<organism>
    <name type="scientific">Pan troglodytes</name>
    <name type="common">Chimpanzee</name>
    <dbReference type="NCBI Taxonomy" id="9598"/>
    <lineage>
        <taxon>Eukaryota</taxon>
        <taxon>Metazoa</taxon>
        <taxon>Chordata</taxon>
        <taxon>Craniata</taxon>
        <taxon>Vertebrata</taxon>
        <taxon>Euteleostomi</taxon>
        <taxon>Mammalia</taxon>
        <taxon>Eutheria</taxon>
        <taxon>Euarchontoglires</taxon>
        <taxon>Primates</taxon>
        <taxon>Haplorrhini</taxon>
        <taxon>Catarrhini</taxon>
        <taxon>Hominidae</taxon>
        <taxon>Pan</taxon>
    </lineage>
</organism>
<sequence length="309" mass="35386">MTTFIPIIFSSLVVVIFVIGNFANGFIALVNSIEWFKRQKISFADQILTALAVSRVGLLWVLLLNWYSTVLNPAFYSVEVRTTAYNVWAVTGHFSNWLATSLSIFYLLKIANFSNLIFLHLKRRVKSVILVMLLGPLLFLACQLFMINMKEIVRTKEYEGNMTWKIKLRSAVYLSDATVTTLGNLVPFTLTLLCFLLLICSLCKHLKKMQLHGKGSQDPSTKVHIKVLQTVISFLLLCAIYFLSIMISVWSFGSLKNKPVFMFCKAMRFSYPSIHPFILIWGNKKLKQTFLSVLRQVRYWVKGEKPSSP</sequence>
<name>T2R31_PANTR</name>
<reference key="1">
    <citation type="journal article" date="2005" name="Mol. Biol. Evol.">
        <title>Evolution of bitter taste receptors in humans and apes.</title>
        <authorList>
            <person name="Fischer A."/>
            <person name="Gilad Y."/>
            <person name="Man O."/>
            <person name="Paeaebo S."/>
        </authorList>
    </citation>
    <scope>NUCLEOTIDE SEQUENCE [GENOMIC DNA]</scope>
</reference>
<comment type="function">
    <text evidence="1">Receptor that may play a role in the perception of bitterness and is gustducin-linked. May play a role in sensing the chemical composition of the gastrointestinal content. The activity of this receptor may stimulate alpha gustducin, mediate PLC-beta-2 activation and lead to the gating of TRPM5 (By similarity).</text>
</comment>
<comment type="subcellular location">
    <subcellularLocation>
        <location>Membrane</location>
        <topology>Multi-pass membrane protein</topology>
    </subcellularLocation>
</comment>
<comment type="miscellaneous">
    <text>Most taste cells may be activated by a limited number of bitter compounds; individual taste cells can discriminate among bitter stimuli.</text>
</comment>
<comment type="similarity">
    <text evidence="3">Belongs to the G-protein coupled receptor T2R family.</text>
</comment>
<dbReference type="EMBL" id="AY724878">
    <property type="protein sequence ID" value="AAU21100.1"/>
    <property type="molecule type" value="Genomic_DNA"/>
</dbReference>
<dbReference type="RefSeq" id="XP_016778470.1">
    <property type="nucleotide sequence ID" value="XM_016922981.1"/>
</dbReference>
<dbReference type="SMR" id="Q646B9"/>
<dbReference type="FunCoup" id="Q646B9">
    <property type="interactions" value="222"/>
</dbReference>
<dbReference type="GlyCosmos" id="Q646B9">
    <property type="glycosylation" value="1 site, No reported glycans"/>
</dbReference>
<dbReference type="GeneID" id="739382"/>
<dbReference type="KEGG" id="ptr:739382"/>
<dbReference type="InParanoid" id="Q646B9"/>
<dbReference type="Proteomes" id="UP000002277">
    <property type="component" value="Unplaced"/>
</dbReference>
<dbReference type="GO" id="GO:0016020">
    <property type="term" value="C:membrane"/>
    <property type="evidence" value="ECO:0000318"/>
    <property type="project" value="GO_Central"/>
</dbReference>
<dbReference type="GO" id="GO:0005886">
    <property type="term" value="C:plasma membrane"/>
    <property type="evidence" value="ECO:0007669"/>
    <property type="project" value="UniProtKB-ARBA"/>
</dbReference>
<dbReference type="GO" id="GO:0033038">
    <property type="term" value="F:bitter taste receptor activity"/>
    <property type="evidence" value="ECO:0000318"/>
    <property type="project" value="GO_Central"/>
</dbReference>
<dbReference type="GO" id="GO:0004930">
    <property type="term" value="F:G protein-coupled receptor activity"/>
    <property type="evidence" value="ECO:0007669"/>
    <property type="project" value="UniProtKB-KW"/>
</dbReference>
<dbReference type="GO" id="GO:0001580">
    <property type="term" value="P:detection of chemical stimulus involved in sensory perception of bitter taste"/>
    <property type="evidence" value="ECO:0000318"/>
    <property type="project" value="GO_Central"/>
</dbReference>
<dbReference type="CDD" id="cd15027">
    <property type="entry name" value="7tm_TAS2R43-like"/>
    <property type="match status" value="1"/>
</dbReference>
<dbReference type="FunFam" id="1.20.1070.10:FF:000042">
    <property type="entry name" value="Taste receptor type 2 member 7"/>
    <property type="match status" value="1"/>
</dbReference>
<dbReference type="Gene3D" id="1.20.1070.10">
    <property type="entry name" value="Rhodopsin 7-helix transmembrane proteins"/>
    <property type="match status" value="1"/>
</dbReference>
<dbReference type="InterPro" id="IPR007960">
    <property type="entry name" value="TAS2R"/>
</dbReference>
<dbReference type="PANTHER" id="PTHR11394">
    <property type="entry name" value="TASTE RECEPTOR TYPE 2"/>
    <property type="match status" value="1"/>
</dbReference>
<dbReference type="PANTHER" id="PTHR11394:SF129">
    <property type="entry name" value="TASTE RECEPTOR TYPE 2 MEMBER 31"/>
    <property type="match status" value="1"/>
</dbReference>
<dbReference type="Pfam" id="PF05296">
    <property type="entry name" value="TAS2R"/>
    <property type="match status" value="1"/>
</dbReference>
<dbReference type="SUPFAM" id="SSF81321">
    <property type="entry name" value="Family A G protein-coupled receptor-like"/>
    <property type="match status" value="1"/>
</dbReference>
<proteinExistence type="inferred from homology"/>